<organism>
    <name type="scientific">Rickettsia typhi (strain ATCC VR-144 / Wilmington)</name>
    <dbReference type="NCBI Taxonomy" id="257363"/>
    <lineage>
        <taxon>Bacteria</taxon>
        <taxon>Pseudomonadati</taxon>
        <taxon>Pseudomonadota</taxon>
        <taxon>Alphaproteobacteria</taxon>
        <taxon>Rickettsiales</taxon>
        <taxon>Rickettsiaceae</taxon>
        <taxon>Rickettsieae</taxon>
        <taxon>Rickettsia</taxon>
        <taxon>typhus group</taxon>
    </lineage>
</organism>
<sequence>MIKCTRRIDFDAGHRIIGHKNKCQFLHGHHYVLEITIAANKTDKLGMVIDFGLIKNLAKKWIDANFDHNLILHQDDKEIGKQIENYTGQKIYYMRNNPTAENIAIHLKNEIFPKLFIDQNFFVTSLKLYETQNCFVEV</sequence>
<accession>Q68XI9</accession>
<keyword id="KW-0456">Lyase</keyword>
<keyword id="KW-0479">Metal-binding</keyword>
<keyword id="KW-0671">Queuosine biosynthesis</keyword>
<keyword id="KW-0862">Zinc</keyword>
<name>QUED_RICTY</name>
<protein>
    <recommendedName>
        <fullName>6-carboxy-5,6,7,8-tetrahydropterin synthase</fullName>
        <shortName>CPH4 synthase</shortName>
        <ecNumber>4.1.2.50</ecNumber>
    </recommendedName>
    <alternativeName>
        <fullName>Queuosine biosynthesis protein QueD</fullName>
    </alternativeName>
</protein>
<feature type="chain" id="PRO_0000272632" description="6-carboxy-5,6,7,8-tetrahydropterin synthase">
    <location>
        <begin position="1"/>
        <end position="138"/>
    </location>
</feature>
<feature type="active site" description="Proton acceptor" evidence="1">
    <location>
        <position position="23"/>
    </location>
</feature>
<feature type="active site" description="Charge relay system" evidence="1">
    <location>
        <position position="68"/>
    </location>
</feature>
<feature type="active site" description="Charge relay system" evidence="1">
    <location>
        <position position="130"/>
    </location>
</feature>
<feature type="binding site" evidence="1">
    <location>
        <position position="14"/>
    </location>
    <ligand>
        <name>Zn(2+)</name>
        <dbReference type="ChEBI" id="CHEBI:29105"/>
    </ligand>
</feature>
<feature type="binding site" evidence="1">
    <location>
        <position position="27"/>
    </location>
    <ligand>
        <name>Zn(2+)</name>
        <dbReference type="ChEBI" id="CHEBI:29105"/>
    </ligand>
</feature>
<feature type="binding site" evidence="1">
    <location>
        <position position="29"/>
    </location>
    <ligand>
        <name>Zn(2+)</name>
        <dbReference type="ChEBI" id="CHEBI:29105"/>
    </ligand>
</feature>
<dbReference type="EC" id="4.1.2.50"/>
<dbReference type="EMBL" id="AE017197">
    <property type="protein sequence ID" value="AAU03653.1"/>
    <property type="molecule type" value="Genomic_DNA"/>
</dbReference>
<dbReference type="RefSeq" id="WP_011190640.1">
    <property type="nucleotide sequence ID" value="NC_006142.1"/>
</dbReference>
<dbReference type="SMR" id="Q68XI9"/>
<dbReference type="KEGG" id="rty:RT0169"/>
<dbReference type="eggNOG" id="COG0720">
    <property type="taxonomic scope" value="Bacteria"/>
</dbReference>
<dbReference type="HOGENOM" id="CLU_111016_1_1_5"/>
<dbReference type="OrthoDB" id="9804698at2"/>
<dbReference type="UniPathway" id="UPA00391"/>
<dbReference type="Proteomes" id="UP000000604">
    <property type="component" value="Chromosome"/>
</dbReference>
<dbReference type="GO" id="GO:0070497">
    <property type="term" value="F:6-carboxytetrahydropterin synthase activity"/>
    <property type="evidence" value="ECO:0007669"/>
    <property type="project" value="UniProtKB-EC"/>
</dbReference>
<dbReference type="GO" id="GO:0046872">
    <property type="term" value="F:metal ion binding"/>
    <property type="evidence" value="ECO:0007669"/>
    <property type="project" value="UniProtKB-KW"/>
</dbReference>
<dbReference type="GO" id="GO:0008616">
    <property type="term" value="P:queuosine biosynthetic process"/>
    <property type="evidence" value="ECO:0007669"/>
    <property type="project" value="UniProtKB-KW"/>
</dbReference>
<dbReference type="Gene3D" id="3.30.479.10">
    <property type="entry name" value="6-pyruvoyl tetrahydropterin synthase/QueD"/>
    <property type="match status" value="1"/>
</dbReference>
<dbReference type="InterPro" id="IPR007115">
    <property type="entry name" value="6-PTP_synth/QueD"/>
</dbReference>
<dbReference type="InterPro" id="IPR038418">
    <property type="entry name" value="6-PTP_synth/QueD_sf"/>
</dbReference>
<dbReference type="PANTHER" id="PTHR12589:SF7">
    <property type="entry name" value="6-PYRUVOYL TETRAHYDROBIOPTERIN SYNTHASE"/>
    <property type="match status" value="1"/>
</dbReference>
<dbReference type="PANTHER" id="PTHR12589">
    <property type="entry name" value="PYRUVOYL TETRAHYDROBIOPTERIN SYNTHASE"/>
    <property type="match status" value="1"/>
</dbReference>
<dbReference type="Pfam" id="PF01242">
    <property type="entry name" value="PTPS"/>
    <property type="match status" value="1"/>
</dbReference>
<dbReference type="SUPFAM" id="SSF55620">
    <property type="entry name" value="Tetrahydrobiopterin biosynthesis enzymes-like"/>
    <property type="match status" value="1"/>
</dbReference>
<evidence type="ECO:0000250" key="1"/>
<evidence type="ECO:0000305" key="2"/>
<reference key="1">
    <citation type="journal article" date="2004" name="J. Bacteriol.">
        <title>Complete genome sequence of Rickettsia typhi and comparison with sequences of other Rickettsiae.</title>
        <authorList>
            <person name="McLeod M.P."/>
            <person name="Qin X."/>
            <person name="Karpathy S.E."/>
            <person name="Gioia J."/>
            <person name="Highlander S.K."/>
            <person name="Fox G.E."/>
            <person name="McNeill T.Z."/>
            <person name="Jiang H."/>
            <person name="Muzny D."/>
            <person name="Jacob L.S."/>
            <person name="Hawes A.C."/>
            <person name="Sodergren E."/>
            <person name="Gill R."/>
            <person name="Hume J."/>
            <person name="Morgan M."/>
            <person name="Fan G."/>
            <person name="Amin A.G."/>
            <person name="Gibbs R.A."/>
            <person name="Hong C."/>
            <person name="Yu X.-J."/>
            <person name="Walker D.H."/>
            <person name="Weinstock G.M."/>
        </authorList>
    </citation>
    <scope>NUCLEOTIDE SEQUENCE [LARGE SCALE GENOMIC DNA]</scope>
    <source>
        <strain>ATCC VR-144 / Wilmington</strain>
    </source>
</reference>
<gene>
    <name type="primary">queD</name>
    <name type="ordered locus">RT0169</name>
</gene>
<comment type="function">
    <text evidence="1">Catalyzes the conversion of 7,8-dihydroneopterin triphosphate (H2NTP) to 6-carboxy-5,6,7,8-tetrahydropterin (CPH4) and acetaldehyde.</text>
</comment>
<comment type="catalytic activity">
    <reaction>
        <text>7,8-dihydroneopterin 3'-triphosphate + H2O = 6-carboxy-5,6,7,8-tetrahydropterin + triphosphate + acetaldehyde + 2 H(+)</text>
        <dbReference type="Rhea" id="RHEA:27966"/>
        <dbReference type="ChEBI" id="CHEBI:15343"/>
        <dbReference type="ChEBI" id="CHEBI:15377"/>
        <dbReference type="ChEBI" id="CHEBI:15378"/>
        <dbReference type="ChEBI" id="CHEBI:18036"/>
        <dbReference type="ChEBI" id="CHEBI:58462"/>
        <dbReference type="ChEBI" id="CHEBI:61032"/>
        <dbReference type="EC" id="4.1.2.50"/>
    </reaction>
</comment>
<comment type="cofactor">
    <cofactor evidence="1">
        <name>Zn(2+)</name>
        <dbReference type="ChEBI" id="CHEBI:29105"/>
    </cofactor>
    <text evidence="1">Binds 1 zinc ion per subunit.</text>
</comment>
<comment type="pathway">
    <text>Purine metabolism; 7-cyano-7-deazaguanine biosynthesis.</text>
</comment>
<comment type="miscellaneous">
    <text evidence="1">The active site is at the interface between 2 subunits. The proton acceptor Cys is on one subunit, and the charge relay system is on the other subunit (By similarity).</text>
</comment>
<comment type="similarity">
    <text evidence="2">Belongs to the PTPS family. QueD subfamily.</text>
</comment>
<proteinExistence type="inferred from homology"/>